<reference key="1">
    <citation type="submission" date="2006-02" db="EMBL/GenBank/DDBJ databases">
        <authorList>
            <consortium name="The International Medicago Genome Annotation Group"/>
        </authorList>
    </citation>
    <scope>NUCLEOTIDE SEQUENCE [LARGE SCALE GENOMIC DNA]</scope>
</reference>
<keyword id="KW-0489">Methyltransferase</keyword>
<keyword id="KW-0539">Nucleus</keyword>
<keyword id="KW-0694">RNA-binding</keyword>
<keyword id="KW-0949">S-adenosyl-L-methionine</keyword>
<keyword id="KW-0808">Transferase</keyword>
<evidence type="ECO:0000250" key="1">
    <source>
        <dbReference type="UniProtKB" id="O82486"/>
    </source>
</evidence>
<evidence type="ECO:0000250" key="2">
    <source>
        <dbReference type="UniProtKB" id="Q86U44"/>
    </source>
</evidence>
<evidence type="ECO:0000255" key="3">
    <source>
        <dbReference type="PROSITE-ProRule" id="PRU00489"/>
    </source>
</evidence>
<evidence type="ECO:0000256" key="4">
    <source>
        <dbReference type="SAM" id="MobiDB-lite"/>
    </source>
</evidence>
<dbReference type="EC" id="2.1.1.348" evidence="1"/>
<dbReference type="EMBL" id="AC148918">
    <property type="protein sequence ID" value="ABD28511.1"/>
    <property type="molecule type" value="Genomic_DNA"/>
</dbReference>
<dbReference type="SMR" id="Q2HVD6"/>
<dbReference type="PaxDb" id="3880-AES67837"/>
<dbReference type="EnsemblPlants" id="rna12555">
    <property type="protein sequence ID" value="RHN76260.1"/>
    <property type="gene ID" value="gene12555"/>
</dbReference>
<dbReference type="Gramene" id="rna12555">
    <property type="protein sequence ID" value="RHN76260.1"/>
    <property type="gene ID" value="gene12555"/>
</dbReference>
<dbReference type="KEGG" id="mtr:11429893"/>
<dbReference type="eggNOG" id="KOG2098">
    <property type="taxonomic scope" value="Eukaryota"/>
</dbReference>
<dbReference type="HOGENOM" id="CLU_018702_3_0_1"/>
<dbReference type="OMA" id="YAMMERI"/>
<dbReference type="OrthoDB" id="10262526at2759"/>
<dbReference type="GO" id="GO:0005634">
    <property type="term" value="C:nucleus"/>
    <property type="evidence" value="ECO:0007669"/>
    <property type="project" value="UniProtKB-SubCell"/>
</dbReference>
<dbReference type="GO" id="GO:0001734">
    <property type="term" value="F:mRNA m(6)A methyltransferase activity"/>
    <property type="evidence" value="ECO:0007669"/>
    <property type="project" value="UniProtKB-EC"/>
</dbReference>
<dbReference type="GO" id="GO:0003723">
    <property type="term" value="F:RNA binding"/>
    <property type="evidence" value="ECO:0007669"/>
    <property type="project" value="UniProtKB-KW"/>
</dbReference>
<dbReference type="GO" id="GO:0032259">
    <property type="term" value="P:methylation"/>
    <property type="evidence" value="ECO:0007669"/>
    <property type="project" value="UniProtKB-KW"/>
</dbReference>
<dbReference type="Gene3D" id="3.40.50.150">
    <property type="entry name" value="Vaccinia Virus protein VP39"/>
    <property type="match status" value="1"/>
</dbReference>
<dbReference type="InterPro" id="IPR007757">
    <property type="entry name" value="MT-A70-like"/>
</dbReference>
<dbReference type="InterPro" id="IPR029063">
    <property type="entry name" value="SAM-dependent_MTases_sf"/>
</dbReference>
<dbReference type="PANTHER" id="PTHR12829">
    <property type="entry name" value="N6-ADENOSINE-METHYLTRANSFERASE"/>
    <property type="match status" value="1"/>
</dbReference>
<dbReference type="PANTHER" id="PTHR12829:SF2">
    <property type="entry name" value="N6-ADENOSINE-METHYLTRANSFERASE MT-A70-LIKE"/>
    <property type="match status" value="1"/>
</dbReference>
<dbReference type="Pfam" id="PF05063">
    <property type="entry name" value="MT-A70"/>
    <property type="match status" value="1"/>
</dbReference>
<dbReference type="SUPFAM" id="SSF53335">
    <property type="entry name" value="S-adenosyl-L-methionine-dependent methyltransferases"/>
    <property type="match status" value="1"/>
</dbReference>
<dbReference type="PROSITE" id="PS51143">
    <property type="entry name" value="MT_A70"/>
    <property type="match status" value="1"/>
</dbReference>
<protein>
    <recommendedName>
        <fullName>Putative N(6)-adenosine-methyltransferase MT-A70-like</fullName>
        <ecNumber evidence="1">2.1.1.348</ecNumber>
    </recommendedName>
</protein>
<accession>Q2HVD6</accession>
<gene>
    <name type="ORF">MtrDRAFT_AC148918g15v1</name>
</gene>
<name>MTA70_MEDTR</name>
<feature type="chain" id="PRO_0000260071" description="Putative N(6)-adenosine-methyltransferase MT-A70-like">
    <location>
        <begin position="1"/>
        <end position="614"/>
    </location>
</feature>
<feature type="region of interest" description="Disordered" evidence="4">
    <location>
        <begin position="59"/>
        <end position="78"/>
    </location>
</feature>
<feature type="region of interest" description="Positively charged region required for RNA-binding" evidence="2">
    <location>
        <begin position="479"/>
        <end position="492"/>
    </location>
</feature>
<feature type="region of interest" description="Disordered" evidence="4">
    <location>
        <begin position="589"/>
        <end position="614"/>
    </location>
</feature>
<feature type="compositionally biased region" description="Low complexity" evidence="4">
    <location>
        <begin position="67"/>
        <end position="78"/>
    </location>
</feature>
<feature type="compositionally biased region" description="Polar residues" evidence="4">
    <location>
        <begin position="604"/>
        <end position="614"/>
    </location>
</feature>
<feature type="binding site" evidence="2">
    <location>
        <begin position="391"/>
        <end position="392"/>
    </location>
    <ligand>
        <name>S-adenosyl-L-methionine</name>
        <dbReference type="ChEBI" id="CHEBI:59789"/>
    </ligand>
</feature>
<feature type="binding site" evidence="2">
    <location>
        <position position="409"/>
    </location>
    <ligand>
        <name>S-adenosyl-L-methionine</name>
        <dbReference type="ChEBI" id="CHEBI:59789"/>
    </ligand>
</feature>
<feature type="binding site" evidence="2">
    <location>
        <position position="526"/>
    </location>
    <ligand>
        <name>S-adenosyl-L-methionine</name>
        <dbReference type="ChEBI" id="CHEBI:59789"/>
    </ligand>
</feature>
<feature type="binding site" evidence="2">
    <location>
        <begin position="549"/>
        <end position="552"/>
    </location>
    <ligand>
        <name>S-adenosyl-L-methionine</name>
        <dbReference type="ChEBI" id="CHEBI:59789"/>
    </ligand>
</feature>
<feature type="binding site" evidence="2">
    <location>
        <begin position="562"/>
        <end position="563"/>
    </location>
    <ligand>
        <name>S-adenosyl-L-methionine</name>
        <dbReference type="ChEBI" id="CHEBI:59789"/>
    </ligand>
</feature>
<sequence>MEMETDEGINSLKARIETQHKSHMYMLSSVQSVIPNFVSSLDLSLKVLSSFNHRPFAPTPPLTNFNPPKSSSLQQLPQKPSVKTLKTSLVVTTNPVLEKVTPLSVVLSMVAVCLLSRLPFMEIDSSTLWRKLENDETFTPQDKAAFQELAGDSGGPTLAVEIALRSMADDNGAVELEEFAVSGKSRIMVLNIDRTRLLRQLPETAQHQLQQQQDELSLGDGNMNQNQQQIAKCSMNLEDVDALINKKSFREMQKYETAKELLKIIQTPSIREAAVAAKFKTKGGSQMRPYCDLPTKEDCRRRTGSFIACNKLHFRRIIALHTDINLGDCPFLRTCRHMNTCKYVHYEEDPTPDLPPTMMCAPPPPLKPLKQQRAEYCSEAELGQPQWINCDIRNFRMDILGKFGVIMADPPWDIHMELPYGTMADDEMRTLNVPALQTHGLIFLWVTGRAMELGRECLERWGYKCVEEIIWVKTNQLQRIIRTGRTGHWLNHSKEHCLVGIKGSPEVNRNIDTNVIVSEVRETSRKPDEMYAMMERISPGTRKVELFARMHNTHAGWMSLGNQLSGVRLVDEGLRARFKAAYPDVEVQPASPSRASAMELDSSVAAQTTTSAMM</sequence>
<proteinExistence type="inferred from homology"/>
<organism>
    <name type="scientific">Medicago truncatula</name>
    <name type="common">Barrel medic</name>
    <name type="synonym">Medicago tribuloides</name>
    <dbReference type="NCBI Taxonomy" id="3880"/>
    <lineage>
        <taxon>Eukaryota</taxon>
        <taxon>Viridiplantae</taxon>
        <taxon>Streptophyta</taxon>
        <taxon>Embryophyta</taxon>
        <taxon>Tracheophyta</taxon>
        <taxon>Spermatophyta</taxon>
        <taxon>Magnoliopsida</taxon>
        <taxon>eudicotyledons</taxon>
        <taxon>Gunneridae</taxon>
        <taxon>Pentapetalae</taxon>
        <taxon>rosids</taxon>
        <taxon>fabids</taxon>
        <taxon>Fabales</taxon>
        <taxon>Fabaceae</taxon>
        <taxon>Papilionoideae</taxon>
        <taxon>50 kb inversion clade</taxon>
        <taxon>NPAAA clade</taxon>
        <taxon>Hologalegina</taxon>
        <taxon>IRL clade</taxon>
        <taxon>Trifolieae</taxon>
        <taxon>Medicago</taxon>
    </lineage>
</organism>
<comment type="function">
    <text evidence="1">Putative N6-methyltransferase that methylates adenosine residues of some mRNAs. N6-methyladenosine (m6A), which is present at internal sites of some mRNAs, may play a role in the efficiency of mRNA splicing, transport or translation (By similarity).</text>
</comment>
<comment type="catalytic activity">
    <reaction evidence="1">
        <text>an adenosine in mRNA + S-adenosyl-L-methionine = an N(6)-methyladenosine in mRNA + S-adenosyl-L-homocysteine + H(+)</text>
        <dbReference type="Rhea" id="RHEA:55584"/>
        <dbReference type="Rhea" id="RHEA-COMP:12414"/>
        <dbReference type="Rhea" id="RHEA-COMP:12417"/>
        <dbReference type="ChEBI" id="CHEBI:15378"/>
        <dbReference type="ChEBI" id="CHEBI:57856"/>
        <dbReference type="ChEBI" id="CHEBI:59789"/>
        <dbReference type="ChEBI" id="CHEBI:74411"/>
        <dbReference type="ChEBI" id="CHEBI:74449"/>
        <dbReference type="EC" id="2.1.1.348"/>
    </reaction>
</comment>
<comment type="subcellular location">
    <subcellularLocation>
        <location evidence="1">Nucleus</location>
    </subcellularLocation>
</comment>
<comment type="similarity">
    <text evidence="3">Belongs to the MT-A70-like family.</text>
</comment>